<protein>
    <recommendedName>
        <fullName>MAP7 domain-containing protein 1</fullName>
    </recommendedName>
</protein>
<evidence type="ECO:0000250" key="1">
    <source>
        <dbReference type="UniProtKB" id="Q3KQU3"/>
    </source>
</evidence>
<evidence type="ECO:0000255" key="2"/>
<evidence type="ECO:0000256" key="3">
    <source>
        <dbReference type="SAM" id="MobiDB-lite"/>
    </source>
</evidence>
<evidence type="ECO:0000269" key="4">
    <source>
    </source>
</evidence>
<evidence type="ECO:0000303" key="5">
    <source>
    </source>
</evidence>
<evidence type="ECO:0000305" key="6"/>
<evidence type="ECO:0007744" key="7">
    <source>
    </source>
</evidence>
<evidence type="ECO:0007744" key="8">
    <source>
    </source>
</evidence>
<evidence type="ECO:0007744" key="9">
    <source>
    </source>
</evidence>
<gene>
    <name type="primary">Map7d1</name>
    <name type="synonym">Kiaa1187</name>
    <name type="synonym">Mtap7d1</name>
</gene>
<dbReference type="EMBL" id="AL732624">
    <property type="status" value="NOT_ANNOTATED_CDS"/>
    <property type="molecule type" value="Genomic_DNA"/>
</dbReference>
<dbReference type="EMBL" id="BC016081">
    <property type="protein sequence ID" value="AAH16081.1"/>
    <property type="status" value="ALT_INIT"/>
    <property type="molecule type" value="mRNA"/>
</dbReference>
<dbReference type="EMBL" id="BC019977">
    <property type="protein sequence ID" value="AAH19977.1"/>
    <property type="status" value="ALT_INIT"/>
    <property type="molecule type" value="mRNA"/>
</dbReference>
<dbReference type="EMBL" id="BC023677">
    <property type="protein sequence ID" value="AAH23677.1"/>
    <property type="molecule type" value="mRNA"/>
</dbReference>
<dbReference type="EMBL" id="AK122462">
    <property type="protein sequence ID" value="BAC65744.3"/>
    <property type="status" value="ALT_SEQ"/>
    <property type="molecule type" value="Transcribed_RNA"/>
</dbReference>
<dbReference type="CCDS" id="CCDS18646.1">
    <molecule id="A2AJI0-1"/>
</dbReference>
<dbReference type="RefSeq" id="NP_001366021.1">
    <molecule id="A2AJI0-2"/>
    <property type="nucleotide sequence ID" value="NM_001379092.1"/>
</dbReference>
<dbReference type="RefSeq" id="NP_659190.3">
    <molecule id="A2AJI0-1"/>
    <property type="nucleotide sequence ID" value="NM_144941.3"/>
</dbReference>
<dbReference type="RefSeq" id="XP_006503175.1">
    <property type="nucleotide sequence ID" value="XM_006503112.3"/>
</dbReference>
<dbReference type="SMR" id="A2AJI0"/>
<dbReference type="BioGRID" id="232845">
    <property type="interactions" value="9"/>
</dbReference>
<dbReference type="FunCoup" id="A2AJI0">
    <property type="interactions" value="225"/>
</dbReference>
<dbReference type="IntAct" id="A2AJI0">
    <property type="interactions" value="3"/>
</dbReference>
<dbReference type="MINT" id="A2AJI0"/>
<dbReference type="STRING" id="10090.ENSMUSP00000054338"/>
<dbReference type="GlyGen" id="A2AJI0">
    <property type="glycosylation" value="7 sites, 1 O-linked glycan (2 sites)"/>
</dbReference>
<dbReference type="iPTMnet" id="A2AJI0"/>
<dbReference type="PhosphoSitePlus" id="A2AJI0"/>
<dbReference type="SwissPalm" id="A2AJI0"/>
<dbReference type="jPOST" id="A2AJI0"/>
<dbReference type="PaxDb" id="10090-ENSMUSP00000054338"/>
<dbReference type="PeptideAtlas" id="A2AJI0"/>
<dbReference type="ProteomicsDB" id="287288">
    <molecule id="A2AJI0-1"/>
</dbReference>
<dbReference type="ProteomicsDB" id="287289">
    <molecule id="A2AJI0-2"/>
</dbReference>
<dbReference type="Pumba" id="A2AJI0"/>
<dbReference type="Antibodypedia" id="31646">
    <property type="antibodies" value="70 antibodies from 18 providers"/>
</dbReference>
<dbReference type="DNASU" id="245877"/>
<dbReference type="Ensembl" id="ENSMUST00000061143.15">
    <molecule id="A2AJI0-1"/>
    <property type="protein sequence ID" value="ENSMUSP00000054338.9"/>
    <property type="gene ID" value="ENSMUSG00000028849.18"/>
</dbReference>
<dbReference type="GeneID" id="245877"/>
<dbReference type="KEGG" id="mmu:245877"/>
<dbReference type="UCSC" id="uc008usy.1">
    <molecule id="A2AJI0-1"/>
    <property type="organism name" value="mouse"/>
</dbReference>
<dbReference type="AGR" id="MGI:2384297"/>
<dbReference type="CTD" id="55700"/>
<dbReference type="MGI" id="MGI:2384297">
    <property type="gene designation" value="Map7d1"/>
</dbReference>
<dbReference type="VEuPathDB" id="HostDB:ENSMUSG00000028849"/>
<dbReference type="eggNOG" id="ENOG502QPJP">
    <property type="taxonomic scope" value="Eukaryota"/>
</dbReference>
<dbReference type="GeneTree" id="ENSGT00950000182941"/>
<dbReference type="InParanoid" id="A2AJI0"/>
<dbReference type="OMA" id="MERSCAG"/>
<dbReference type="OrthoDB" id="10066352at2759"/>
<dbReference type="PhylomeDB" id="A2AJI0"/>
<dbReference type="TreeFam" id="TF332273"/>
<dbReference type="BioGRID-ORCS" id="245877">
    <property type="hits" value="3 hits in 75 CRISPR screens"/>
</dbReference>
<dbReference type="CD-CODE" id="CE726F99">
    <property type="entry name" value="Postsynaptic density"/>
</dbReference>
<dbReference type="ChiTaRS" id="Map7d1">
    <property type="organism name" value="mouse"/>
</dbReference>
<dbReference type="PRO" id="PR:A2AJI0"/>
<dbReference type="Proteomes" id="UP000000589">
    <property type="component" value="Chromosome 4"/>
</dbReference>
<dbReference type="RNAct" id="A2AJI0">
    <property type="molecule type" value="protein"/>
</dbReference>
<dbReference type="Bgee" id="ENSMUSG00000028849">
    <property type="expression patterns" value="Expressed in triceps brachii and 262 other cell types or tissues"/>
</dbReference>
<dbReference type="ExpressionAtlas" id="A2AJI0">
    <property type="expression patterns" value="baseline and differential"/>
</dbReference>
<dbReference type="GO" id="GO:0005813">
    <property type="term" value="C:centrosome"/>
    <property type="evidence" value="ECO:0000314"/>
    <property type="project" value="UniProtKB"/>
</dbReference>
<dbReference type="GO" id="GO:0005737">
    <property type="term" value="C:cytoplasm"/>
    <property type="evidence" value="ECO:0007669"/>
    <property type="project" value="UniProtKB-KW"/>
</dbReference>
<dbReference type="GO" id="GO:0015630">
    <property type="term" value="C:microtubule cytoskeleton"/>
    <property type="evidence" value="ECO:0000314"/>
    <property type="project" value="UniProtKB"/>
</dbReference>
<dbReference type="GO" id="GO:0030496">
    <property type="term" value="C:midbody"/>
    <property type="evidence" value="ECO:0007669"/>
    <property type="project" value="UniProtKB-SubCell"/>
</dbReference>
<dbReference type="GO" id="GO:0005819">
    <property type="term" value="C:spindle"/>
    <property type="evidence" value="ECO:0000250"/>
    <property type="project" value="UniProtKB"/>
</dbReference>
<dbReference type="GO" id="GO:0000226">
    <property type="term" value="P:microtubule cytoskeleton organization"/>
    <property type="evidence" value="ECO:0000315"/>
    <property type="project" value="UniProtKB"/>
</dbReference>
<dbReference type="InterPro" id="IPR051483">
    <property type="entry name" value="MAP7_domain-containing"/>
</dbReference>
<dbReference type="InterPro" id="IPR008604">
    <property type="entry name" value="MAP7_fam"/>
</dbReference>
<dbReference type="PANTHER" id="PTHR15073:SF2">
    <property type="entry name" value="MAP7 DOMAIN-CONTAINING PROTEIN 1"/>
    <property type="match status" value="1"/>
</dbReference>
<dbReference type="PANTHER" id="PTHR15073">
    <property type="entry name" value="MICROTUBULE-ASSOCIATED PROTEIN"/>
    <property type="match status" value="1"/>
</dbReference>
<dbReference type="Pfam" id="PF05672">
    <property type="entry name" value="MAP7"/>
    <property type="match status" value="1"/>
</dbReference>
<name>MA7D1_MOUSE</name>
<reference key="1">
    <citation type="journal article" date="2009" name="PLoS Biol.">
        <title>Lineage-specific biology revealed by a finished genome assembly of the mouse.</title>
        <authorList>
            <person name="Church D.M."/>
            <person name="Goodstadt L."/>
            <person name="Hillier L.W."/>
            <person name="Zody M.C."/>
            <person name="Goldstein S."/>
            <person name="She X."/>
            <person name="Bult C.J."/>
            <person name="Agarwala R."/>
            <person name="Cherry J.L."/>
            <person name="DiCuccio M."/>
            <person name="Hlavina W."/>
            <person name="Kapustin Y."/>
            <person name="Meric P."/>
            <person name="Maglott D."/>
            <person name="Birtle Z."/>
            <person name="Marques A.C."/>
            <person name="Graves T."/>
            <person name="Zhou S."/>
            <person name="Teague B."/>
            <person name="Potamousis K."/>
            <person name="Churas C."/>
            <person name="Place M."/>
            <person name="Herschleb J."/>
            <person name="Runnheim R."/>
            <person name="Forrest D."/>
            <person name="Amos-Landgraf J."/>
            <person name="Schwartz D.C."/>
            <person name="Cheng Z."/>
            <person name="Lindblad-Toh K."/>
            <person name="Eichler E.E."/>
            <person name="Ponting C.P."/>
        </authorList>
    </citation>
    <scope>NUCLEOTIDE SEQUENCE [LARGE SCALE GENOMIC DNA]</scope>
    <source>
        <strain>C57BL/6J</strain>
    </source>
</reference>
<reference key="2">
    <citation type="journal article" date="2004" name="Genome Res.">
        <title>The status, quality, and expansion of the NIH full-length cDNA project: the Mammalian Gene Collection (MGC).</title>
        <authorList>
            <consortium name="The MGC Project Team"/>
        </authorList>
    </citation>
    <scope>NUCLEOTIDE SEQUENCE [LARGE SCALE MRNA] (ISOFORM 1)</scope>
    <scope>NUCLEOTIDE SEQUENCE [LARGE SCALE MRNA] OF 220-846 (ISOFORM 2)</scope>
    <source>
        <strain>FVB/N</strain>
        <tissue>Mammary tumor</tissue>
        <tissue>Salivary gland</tissue>
    </source>
</reference>
<reference key="3">
    <citation type="journal article" date="2003" name="DNA Res.">
        <title>Prediction of the coding sequences of mouse homologues of KIAA gene: II. The complete nucleotide sequences of 400 mouse KIAA-homologous cDNAs identified by screening of terminal sequences of cDNA clones randomly sampled from size-fractionated libraries.</title>
        <authorList>
            <person name="Okazaki N."/>
            <person name="Kikuno R."/>
            <person name="Ohara R."/>
            <person name="Inamoto S."/>
            <person name="Aizawa H."/>
            <person name="Yuasa S."/>
            <person name="Nakajima D."/>
            <person name="Nagase T."/>
            <person name="Ohara O."/>
            <person name="Koga H."/>
        </authorList>
    </citation>
    <scope>NUCLEOTIDE SEQUENCE [LARGE SCALE MRNA] OF 291-846 (ISOFORM 1)</scope>
    <source>
        <tissue>Brain</tissue>
    </source>
</reference>
<reference key="4">
    <citation type="submission" date="2003-12" db="EMBL/GenBank/DDBJ databases">
        <authorList>
            <person name="Okazaki N."/>
            <person name="Kikuno R."/>
            <person name="Nagase T."/>
            <person name="Ohara O."/>
            <person name="Koga H."/>
        </authorList>
    </citation>
    <scope>SEQUENCE REVISION</scope>
</reference>
<reference key="5">
    <citation type="journal article" date="2007" name="Proc. Natl. Acad. Sci. U.S.A.">
        <title>Large-scale phosphorylation analysis of mouse liver.</title>
        <authorList>
            <person name="Villen J."/>
            <person name="Beausoleil S.A."/>
            <person name="Gerber S.A."/>
            <person name="Gygi S.P."/>
        </authorList>
    </citation>
    <scope>PHOSPHORYLATION [LARGE SCALE ANALYSIS] AT SER-544; SER-548 AND SER-552</scope>
    <scope>IDENTIFICATION BY MASS SPECTROMETRY [LARGE SCALE ANALYSIS]</scope>
    <source>
        <tissue>Liver</tissue>
    </source>
</reference>
<reference key="6">
    <citation type="journal article" date="2009" name="Immunity">
        <title>The phagosomal proteome in interferon-gamma-activated macrophages.</title>
        <authorList>
            <person name="Trost M."/>
            <person name="English L."/>
            <person name="Lemieux S."/>
            <person name="Courcelles M."/>
            <person name="Desjardins M."/>
            <person name="Thibault P."/>
        </authorList>
    </citation>
    <scope>PHOSPHORYLATION [LARGE SCALE ANALYSIS] AT SER-544; SER-548 AND THR-554</scope>
    <scope>IDENTIFICATION BY MASS SPECTROMETRY [LARGE SCALE ANALYSIS]</scope>
</reference>
<reference key="7">
    <citation type="journal article" date="2010" name="Cell">
        <title>A tissue-specific atlas of mouse protein phosphorylation and expression.</title>
        <authorList>
            <person name="Huttlin E.L."/>
            <person name="Jedrychowski M.P."/>
            <person name="Elias J.E."/>
            <person name="Goswami T."/>
            <person name="Rad R."/>
            <person name="Beausoleil S.A."/>
            <person name="Villen J."/>
            <person name="Haas W."/>
            <person name="Sowa M.E."/>
            <person name="Gygi S.P."/>
        </authorList>
    </citation>
    <scope>PHOSPHORYLATION [LARGE SCALE ANALYSIS] AT THR-53; SER-315; SER-479; SER-496; SER-544; SER-548 AND SER-552</scope>
    <scope>IDENTIFICATION BY MASS SPECTROMETRY [LARGE SCALE ANALYSIS]</scope>
    <source>
        <tissue>Brain</tissue>
        <tissue>Brown adipose tissue</tissue>
        <tissue>Heart</tissue>
        <tissue>Kidney</tissue>
        <tissue>Liver</tissue>
        <tissue>Lung</tissue>
        <tissue>Spleen</tissue>
        <tissue>Testis</tissue>
    </source>
</reference>
<reference key="8">
    <citation type="journal article" date="2022" name="Life. Sci Alliance">
        <title>Map7D2 and Map7D1 facilitate microtubule stabilization through distinct mechanisms in neuronal cells.</title>
        <authorList>
            <person name="Kikuchi K."/>
            <person name="Sakamoto Y."/>
            <person name="Uezu A."/>
            <person name="Yamamoto H."/>
            <person name="Ishiguro K.I."/>
            <person name="Shimamura K."/>
            <person name="Saito T."/>
            <person name="Hisanaga S.I."/>
            <person name="Nakanishi H."/>
        </authorList>
    </citation>
    <scope>SUBCELLULAR LOCATION</scope>
    <scope>FUNCTION</scope>
</reference>
<proteinExistence type="evidence at protein level"/>
<accession>A2AJI0</accession>
<accession>Q80TI3</accession>
<accession>Q8CIL3</accession>
<accession>Q8VCG2</accession>
<accession>Q91YQ4</accession>
<organism>
    <name type="scientific">Mus musculus</name>
    <name type="common">Mouse</name>
    <dbReference type="NCBI Taxonomy" id="10090"/>
    <lineage>
        <taxon>Eukaryota</taxon>
        <taxon>Metazoa</taxon>
        <taxon>Chordata</taxon>
        <taxon>Craniata</taxon>
        <taxon>Vertebrata</taxon>
        <taxon>Euteleostomi</taxon>
        <taxon>Mammalia</taxon>
        <taxon>Eutheria</taxon>
        <taxon>Euarchontoglires</taxon>
        <taxon>Glires</taxon>
        <taxon>Rodentia</taxon>
        <taxon>Myomorpha</taxon>
        <taxon>Muroidea</taxon>
        <taxon>Muridae</taxon>
        <taxon>Murinae</taxon>
        <taxon>Mus</taxon>
        <taxon>Mus</taxon>
    </lineage>
</organism>
<keyword id="KW-0025">Alternative splicing</keyword>
<keyword id="KW-0175">Coiled coil</keyword>
<keyword id="KW-0963">Cytoplasm</keyword>
<keyword id="KW-0206">Cytoskeleton</keyword>
<keyword id="KW-1017">Isopeptide bond</keyword>
<keyword id="KW-0597">Phosphoprotein</keyword>
<keyword id="KW-1185">Reference proteome</keyword>
<keyword id="KW-0832">Ubl conjugation</keyword>
<comment type="function">
    <text evidence="4">Microtubule-stabilizing protein involved in the control of cell motility and neurite outgrowth. Facilitate microtubule stabilization through the maintenance of acetylated stable microtubules.</text>
</comment>
<comment type="subcellular location">
    <subcellularLocation>
        <location evidence="1">Cytoplasm</location>
        <location evidence="1">Cytoskeleton</location>
        <location evidence="1">Spindle</location>
    </subcellularLocation>
    <subcellularLocation>
        <location evidence="4">Cytoplasm</location>
        <location evidence="4">Cytoskeleton</location>
    </subcellularLocation>
    <subcellularLocation>
        <location evidence="4">Cytoplasm</location>
        <location evidence="4">Cytoskeleton</location>
        <location evidence="4">Microtubule organizing center</location>
        <location evidence="4">Centrosome</location>
    </subcellularLocation>
    <subcellularLocation>
        <location evidence="4">Midbody</location>
    </subcellularLocation>
</comment>
<comment type="alternative products">
    <event type="alternative splicing"/>
    <isoform>
        <id>A2AJI0-1</id>
        <name>1</name>
        <sequence type="displayed"/>
    </isoform>
    <isoform>
        <id>A2AJI0-2</id>
        <name>2</name>
        <sequence type="described" ref="VSP_028489"/>
    </isoform>
</comment>
<comment type="similarity">
    <text evidence="6">Belongs to the MAP7 family.</text>
</comment>
<comment type="sequence caution" evidence="6">
    <conflict type="erroneous initiation">
        <sequence resource="EMBL-CDS" id="AAH16081"/>
    </conflict>
</comment>
<comment type="sequence caution" evidence="6">
    <conflict type="erroneous initiation">
        <sequence resource="EMBL-CDS" id="AAH19977"/>
    </conflict>
</comment>
<comment type="sequence caution" evidence="6">
    <conflict type="miscellaneous discrepancy">
        <sequence resource="EMBL-CDS" id="BAC65744"/>
    </conflict>
    <text>The sequence differs from that shown because it is derived from pre-RNA.</text>
</comment>
<feature type="chain" id="PRO_0000306808" description="MAP7 domain-containing protein 1">
    <location>
        <begin position="1"/>
        <end position="846"/>
    </location>
</feature>
<feature type="region of interest" description="Disordered" evidence="3">
    <location>
        <begin position="1"/>
        <end position="153"/>
    </location>
</feature>
<feature type="region of interest" description="Disordered" evidence="3">
    <location>
        <begin position="186"/>
        <end position="210"/>
    </location>
</feature>
<feature type="region of interest" description="Disordered" evidence="3">
    <location>
        <begin position="318"/>
        <end position="816"/>
    </location>
</feature>
<feature type="coiled-coil region" evidence="2">
    <location>
        <begin position="130"/>
        <end position="224"/>
    </location>
</feature>
<feature type="coiled-coil region" evidence="2">
    <location>
        <begin position="414"/>
        <end position="443"/>
    </location>
</feature>
<feature type="coiled-coil region" evidence="2">
    <location>
        <begin position="599"/>
        <end position="740"/>
    </location>
</feature>
<feature type="compositionally biased region" description="Pro residues" evidence="3">
    <location>
        <begin position="24"/>
        <end position="41"/>
    </location>
</feature>
<feature type="compositionally biased region" description="Low complexity" evidence="3">
    <location>
        <begin position="113"/>
        <end position="123"/>
    </location>
</feature>
<feature type="compositionally biased region" description="Basic and acidic residues" evidence="3">
    <location>
        <begin position="132"/>
        <end position="153"/>
    </location>
</feature>
<feature type="compositionally biased region" description="Basic and acidic residues" evidence="3">
    <location>
        <begin position="407"/>
        <end position="437"/>
    </location>
</feature>
<feature type="compositionally biased region" description="Low complexity" evidence="3">
    <location>
        <begin position="460"/>
        <end position="471"/>
    </location>
</feature>
<feature type="compositionally biased region" description="Pro residues" evidence="3">
    <location>
        <begin position="479"/>
        <end position="497"/>
    </location>
</feature>
<feature type="compositionally biased region" description="Basic and acidic residues" evidence="3">
    <location>
        <begin position="523"/>
        <end position="539"/>
    </location>
</feature>
<feature type="compositionally biased region" description="Pro residues" evidence="3">
    <location>
        <begin position="542"/>
        <end position="556"/>
    </location>
</feature>
<feature type="compositionally biased region" description="Low complexity" evidence="3">
    <location>
        <begin position="568"/>
        <end position="579"/>
    </location>
</feature>
<feature type="compositionally biased region" description="Basic and acidic residues" evidence="3">
    <location>
        <begin position="600"/>
        <end position="740"/>
    </location>
</feature>
<feature type="modified residue" description="Phosphothreonine" evidence="1">
    <location>
        <position position="49"/>
    </location>
</feature>
<feature type="modified residue" description="Phosphothreonine" evidence="9">
    <location>
        <position position="53"/>
    </location>
</feature>
<feature type="modified residue" description="Phosphoserine" evidence="1">
    <location>
        <position position="95"/>
    </location>
</feature>
<feature type="modified residue" description="Phosphothreonine" evidence="1">
    <location>
        <position position="99"/>
    </location>
</feature>
<feature type="modified residue" description="Phosphoserine" evidence="1">
    <location>
        <position position="115"/>
    </location>
</feature>
<feature type="modified residue" description="Phosphoserine" evidence="1">
    <location>
        <position position="118"/>
    </location>
</feature>
<feature type="modified residue" description="Phosphothreonine" evidence="1">
    <location>
        <position position="120"/>
    </location>
</feature>
<feature type="modified residue" description="Phosphoserine" evidence="1">
    <location>
        <position position="125"/>
    </location>
</feature>
<feature type="modified residue" description="Phosphoserine" evidence="1">
    <location>
        <position position="127"/>
    </location>
</feature>
<feature type="modified residue" description="Phosphoserine" evidence="1">
    <location>
        <position position="256"/>
    </location>
</feature>
<feature type="modified residue" description="Phosphoserine" evidence="1">
    <location>
        <position position="275"/>
    </location>
</feature>
<feature type="modified residue" description="Phosphoserine" evidence="9">
    <location>
        <position position="315"/>
    </location>
</feature>
<feature type="modified residue" description="Phosphoserine" evidence="1">
    <location>
        <position position="368"/>
    </location>
</feature>
<feature type="modified residue" description="Phosphoserine" evidence="1">
    <location>
        <position position="401"/>
    </location>
</feature>
<feature type="modified residue" description="Phosphoserine" evidence="1">
    <location>
        <position position="444"/>
    </location>
</feature>
<feature type="modified residue" description="Phosphoserine" evidence="1">
    <location>
        <position position="448"/>
    </location>
</feature>
<feature type="modified residue" description="Phosphoserine" evidence="1">
    <location>
        <position position="454"/>
    </location>
</feature>
<feature type="modified residue" description="Phosphoserine" evidence="1">
    <location>
        <position position="460"/>
    </location>
</feature>
<feature type="modified residue" description="Phosphoserine" evidence="9">
    <location>
        <position position="479"/>
    </location>
</feature>
<feature type="modified residue" description="Phosphoserine" evidence="9">
    <location>
        <position position="496"/>
    </location>
</feature>
<feature type="modified residue" description="Phosphoserine" evidence="7 8 9">
    <location>
        <position position="544"/>
    </location>
</feature>
<feature type="modified residue" description="Phosphoserine" evidence="7 8 9">
    <location>
        <position position="548"/>
    </location>
</feature>
<feature type="modified residue" description="Phosphoserine" evidence="7 9">
    <location>
        <position position="552"/>
    </location>
</feature>
<feature type="modified residue" description="Phosphothreonine" evidence="8">
    <location>
        <position position="554"/>
    </location>
</feature>
<feature type="modified residue" description="Phosphothreonine" evidence="1">
    <location>
        <position position="818"/>
    </location>
</feature>
<feature type="cross-link" description="Glycyl lysine isopeptide (Lys-Gly) (interchain with G-Cter in SUMO2)" evidence="1">
    <location>
        <position position="462"/>
    </location>
</feature>
<feature type="splice variant" id="VSP_028489" description="In isoform 2." evidence="5">
    <location>
        <begin position="249"/>
        <end position="285"/>
    </location>
</feature>
<feature type="sequence conflict" description="In Ref. 2; AAH23677." evidence="6" ref="2">
    <original>PAS</original>
    <variation>SAY</variation>
    <location>
        <begin position="123"/>
        <end position="125"/>
    </location>
</feature>
<sequence>MESGPRVEPGPGAPAAVLARIPQEPRPSPEGDPSPPPPPTPMSALVPDTPPDTPPALKTATNPKQLPLEPGNPTGQISPQPAPPQEECPSSEAKSRGPTPTATGPREAKPSRRSSQPSPTTVPASDSPPAKQDVKKAGERHKLAKERREERAKYLAAKKAVWLEKEEKAKALREKQLQERRRRLEEQRLKAEQRRAALEERQRQKLEKNKERYEAAIQRSVKKTWAEIRQQRWSWAGALHHSSPGRKTSGSRCSVSAVNLPKHVDSIINKRLSKSSATLWNSPSRNRSLQLSAWESSIVDRLMTPTLSFLARSRSAVTLPRNGRDQGRGSGPGRRPTRARAGASLAPGPHPDRTHPSAAVPVCPRSASASPLTPCSAPRSAHRCTPSGERPERRKPGAGGSPALARRRLEATPVQKKEKKDKERENEKEKSALARERNLKKRQSLPASIRPRLSTGSELSPKSKARPSSPSTTWHRPASPCPSPGPGHALPPKPPSPRGTTASPKGRVRRKEEAKESPSPSGPEDKNHRKSRAAEEKEPAAPASPAPSPVPSPTPAQPQKEQSSTQIPAETAVPAVPAAPTAPPTAAPSVTPSKPMAGTTDREEATRLLAEKRRQAREQREREEQERKLQAERDKRMREEQLAREAEARAEREAEARRREEQEAREKAQAEQEEQERLQKQKEEAEARSREEAERQRQEREKHFQKEEQERQERRKRLEEIMKRTRKSEAAETKKQDAKETAANNSGPDPVKAVETRPSGLQKDSMQKEELAPQEPQWSLPSKEMPGSLVNGLQPLPAHQENGFSPKGTAGDKSLGRTAEGLLPFAEAEAFLKKAVVQPPQVTEVL</sequence>